<organism>
    <name type="scientific">Caenorhabditis elegans</name>
    <dbReference type="NCBI Taxonomy" id="6239"/>
    <lineage>
        <taxon>Eukaryota</taxon>
        <taxon>Metazoa</taxon>
        <taxon>Ecdysozoa</taxon>
        <taxon>Nematoda</taxon>
        <taxon>Chromadorea</taxon>
        <taxon>Rhabditida</taxon>
        <taxon>Rhabditina</taxon>
        <taxon>Rhabditomorpha</taxon>
        <taxon>Rhabditoidea</taxon>
        <taxon>Rhabditidae</taxon>
        <taxon>Peloderinae</taxon>
        <taxon>Caenorhabditis</taxon>
    </lineage>
</organism>
<reference key="1">
    <citation type="journal article" date="1998" name="Science">
        <title>Genome sequence of the nematode C. elegans: a platform for investigating biology.</title>
        <authorList>
            <consortium name="The C. elegans sequencing consortium"/>
        </authorList>
    </citation>
    <scope>NUCLEOTIDE SEQUENCE [LARGE SCALE GENOMIC DNA]</scope>
    <source>
        <strain>Bristol N2</strain>
    </source>
</reference>
<dbReference type="EC" id="2.7.1.107"/>
<dbReference type="EMBL" id="FO081583">
    <property type="protein sequence ID" value="CCD72614.1"/>
    <property type="molecule type" value="Genomic_DNA"/>
</dbReference>
<dbReference type="PIR" id="T16947">
    <property type="entry name" value="T16947"/>
</dbReference>
<dbReference type="PIR" id="T34334">
    <property type="entry name" value="T34334"/>
</dbReference>
<dbReference type="RefSeq" id="NP_495301.1">
    <property type="nucleotide sequence ID" value="NM_062900.4"/>
</dbReference>
<dbReference type="SMR" id="Q10024"/>
<dbReference type="FunCoup" id="Q10024">
    <property type="interactions" value="830"/>
</dbReference>
<dbReference type="STRING" id="6239.K06A1.6e.1"/>
<dbReference type="iPTMnet" id="Q10024"/>
<dbReference type="PaxDb" id="6239-K06A1.6"/>
<dbReference type="PeptideAtlas" id="Q10024"/>
<dbReference type="EnsemblMetazoa" id="K06A1.6a.1">
    <property type="protein sequence ID" value="K06A1.6a.1"/>
    <property type="gene ID" value="WBGene00019428"/>
</dbReference>
<dbReference type="GeneID" id="174068"/>
<dbReference type="KEGG" id="cel:CELE_K06A1.6"/>
<dbReference type="AGR" id="WB:WBGene00019428"/>
<dbReference type="CTD" id="174068"/>
<dbReference type="WormBase" id="K06A1.6a">
    <property type="protein sequence ID" value="CE28048"/>
    <property type="gene ID" value="WBGene00019428"/>
    <property type="gene designation" value="dgk-5"/>
</dbReference>
<dbReference type="eggNOG" id="KOG0782">
    <property type="taxonomic scope" value="Eukaryota"/>
</dbReference>
<dbReference type="GeneTree" id="ENSGT00940000167477"/>
<dbReference type="HOGENOM" id="CLU_003770_4_1_1"/>
<dbReference type="InParanoid" id="Q10024"/>
<dbReference type="OMA" id="CTPNLMR"/>
<dbReference type="OrthoDB" id="242257at2759"/>
<dbReference type="PhylomeDB" id="Q10024"/>
<dbReference type="Reactome" id="R-CEL-114508">
    <property type="pathway name" value="Effects of PIP2 hydrolysis"/>
</dbReference>
<dbReference type="PRO" id="PR:Q10024"/>
<dbReference type="Proteomes" id="UP000001940">
    <property type="component" value="Chromosome II"/>
</dbReference>
<dbReference type="Bgee" id="WBGene00019428">
    <property type="expression patterns" value="Expressed in larva and 3 other cell types or tissues"/>
</dbReference>
<dbReference type="ExpressionAtlas" id="Q10024">
    <property type="expression patterns" value="baseline and differential"/>
</dbReference>
<dbReference type="GO" id="GO:0005886">
    <property type="term" value="C:plasma membrane"/>
    <property type="evidence" value="ECO:0000318"/>
    <property type="project" value="GO_Central"/>
</dbReference>
<dbReference type="GO" id="GO:0005524">
    <property type="term" value="F:ATP binding"/>
    <property type="evidence" value="ECO:0007669"/>
    <property type="project" value="UniProtKB-KW"/>
</dbReference>
<dbReference type="GO" id="GO:0004143">
    <property type="term" value="F:ATP-dependent diacylglycerol kinase activity"/>
    <property type="evidence" value="ECO:0000318"/>
    <property type="project" value="GO_Central"/>
</dbReference>
<dbReference type="GO" id="GO:0046339">
    <property type="term" value="P:diacylglycerol metabolic process"/>
    <property type="evidence" value="ECO:0000318"/>
    <property type="project" value="GO_Central"/>
</dbReference>
<dbReference type="GO" id="GO:0035556">
    <property type="term" value="P:intracellular signal transduction"/>
    <property type="evidence" value="ECO:0000318"/>
    <property type="project" value="GO_Central"/>
</dbReference>
<dbReference type="GO" id="GO:0006654">
    <property type="term" value="P:phosphatidic acid biosynthetic process"/>
    <property type="evidence" value="ECO:0000318"/>
    <property type="project" value="GO_Central"/>
</dbReference>
<dbReference type="GO" id="GO:0007200">
    <property type="term" value="P:phospholipase C-activating G protein-coupled receptor signaling pathway"/>
    <property type="evidence" value="ECO:0007669"/>
    <property type="project" value="InterPro"/>
</dbReference>
<dbReference type="CDD" id="cd20802">
    <property type="entry name" value="C1_DGK_typeIV_rpt1"/>
    <property type="match status" value="1"/>
</dbReference>
<dbReference type="CDD" id="cd20855">
    <property type="entry name" value="C1_DGK_typeIV_rpt2"/>
    <property type="match status" value="1"/>
</dbReference>
<dbReference type="FunFam" id="2.60.200.40:FF:000022">
    <property type="entry name" value="Diacylglycerol kinase"/>
    <property type="match status" value="1"/>
</dbReference>
<dbReference type="FunFam" id="3.40.50.10330:FF:000037">
    <property type="entry name" value="Diacylglycerol kinase"/>
    <property type="match status" value="1"/>
</dbReference>
<dbReference type="Gene3D" id="2.60.200.40">
    <property type="match status" value="1"/>
</dbReference>
<dbReference type="Gene3D" id="3.40.50.10330">
    <property type="entry name" value="Probable inorganic polyphosphate/atp-NAD kinase, domain 1"/>
    <property type="match status" value="1"/>
</dbReference>
<dbReference type="InterPro" id="IPR017438">
    <property type="entry name" value="ATP-NAD_kinase_N"/>
</dbReference>
<dbReference type="InterPro" id="IPR037607">
    <property type="entry name" value="DGK"/>
</dbReference>
<dbReference type="InterPro" id="IPR000756">
    <property type="entry name" value="Diacylglycerol_kin_accessory"/>
</dbReference>
<dbReference type="InterPro" id="IPR001206">
    <property type="entry name" value="Diacylglycerol_kinase_cat_dom"/>
</dbReference>
<dbReference type="InterPro" id="IPR016064">
    <property type="entry name" value="NAD/diacylglycerol_kinase_sf"/>
</dbReference>
<dbReference type="PANTHER" id="PTHR11255">
    <property type="entry name" value="DIACYLGLYCEROL KINASE"/>
    <property type="match status" value="1"/>
</dbReference>
<dbReference type="PANTHER" id="PTHR11255:SF80">
    <property type="entry name" value="EYE-SPECIFIC DIACYLGLYCEROL KINASE"/>
    <property type="match status" value="1"/>
</dbReference>
<dbReference type="Pfam" id="PF00609">
    <property type="entry name" value="DAGK_acc"/>
    <property type="match status" value="1"/>
</dbReference>
<dbReference type="Pfam" id="PF00781">
    <property type="entry name" value="DAGK_cat"/>
    <property type="match status" value="1"/>
</dbReference>
<dbReference type="SMART" id="SM00045">
    <property type="entry name" value="DAGKa"/>
    <property type="match status" value="1"/>
</dbReference>
<dbReference type="SMART" id="SM00046">
    <property type="entry name" value="DAGKc"/>
    <property type="match status" value="1"/>
</dbReference>
<dbReference type="SUPFAM" id="SSF111331">
    <property type="entry name" value="NAD kinase/diacylglycerol kinase-like"/>
    <property type="match status" value="1"/>
</dbReference>
<dbReference type="PROSITE" id="PS50146">
    <property type="entry name" value="DAGK"/>
    <property type="match status" value="1"/>
</dbReference>
<accession>Q10024</accession>
<accession>Q09588</accession>
<comment type="catalytic activity">
    <reaction>
        <text>a 1,2-diacyl-sn-glycerol + ATP = a 1,2-diacyl-sn-glycero-3-phosphate + ADP + H(+)</text>
        <dbReference type="Rhea" id="RHEA:10272"/>
        <dbReference type="ChEBI" id="CHEBI:15378"/>
        <dbReference type="ChEBI" id="CHEBI:17815"/>
        <dbReference type="ChEBI" id="CHEBI:30616"/>
        <dbReference type="ChEBI" id="CHEBI:58608"/>
        <dbReference type="ChEBI" id="CHEBI:456216"/>
        <dbReference type="EC" id="2.7.1.107"/>
    </reaction>
</comment>
<comment type="similarity">
    <text evidence="3">Belongs to the eukaryotic diacylglycerol kinase family.</text>
</comment>
<gene>
    <name type="primary">dgk-5</name>
    <name type="ORF">K06A1.6</name>
</gene>
<feature type="chain" id="PRO_0000218472" description="Putative diacylglycerol kinase K06A1.6">
    <location>
        <begin position="1"/>
        <end position="937"/>
    </location>
</feature>
<feature type="domain" description="DAGKc" evidence="1">
    <location>
        <begin position="414"/>
        <end position="551"/>
    </location>
</feature>
<feature type="region of interest" description="Disordered" evidence="2">
    <location>
        <begin position="44"/>
        <end position="69"/>
    </location>
</feature>
<feature type="region of interest" description="Disordered" evidence="2">
    <location>
        <begin position="106"/>
        <end position="145"/>
    </location>
</feature>
<feature type="compositionally biased region" description="Low complexity" evidence="2">
    <location>
        <begin position="116"/>
        <end position="129"/>
    </location>
</feature>
<protein>
    <recommendedName>
        <fullName>Putative diacylglycerol kinase K06A1.6</fullName>
        <shortName>DAG kinase</shortName>
        <ecNumber>2.7.1.107</ecNumber>
    </recommendedName>
    <alternativeName>
        <fullName>Diglyceride kinase</fullName>
        <shortName>DGK</shortName>
    </alternativeName>
</protein>
<name>DGK5_CAEEL</name>
<sequence length="937" mass="105198">MIFPIGIPMISKKRKSAQEAVSLREAAERRSQFARVPARSVSAPPRKKWFRSKQQLSGAADGMDGSSRAGSQEIVCDEFTKKLVAAITTWHDIHSSLLQLSIERSSNDSNEEHENVSVSSESSWSSASDSESDEDSATGRDSTNNHLSASAARFSISNPDLTNCQIKQMFPEMADHWRKALAKSPVVRRTAADQETSNPVNKHRSSRYWIEDEGDYHILPSEHVWLPSSTGSSASADSECYVGEKDCRRSGEKRRCAACHIVAHTNCFSLLAKLNLNCKTTFRDYATKKTPSKESTDGLTAHHWVHKWRHEGRCNTCAKSFQQKMFFQGKEKKETIAVTCSWCKESYHLKNCFARDKLEERCNRGALKEMIVPPTWILRLANRKRSSRTPSHPRKHKKSHRQFVVKPTDLWSSGPSQPLLVFVNPKSGGNKGSKALHTLCWLLNPRQVFDITSLKGPKFGLEMFRKVVTQLRILVCGGDGTVGWVLSTLDNLNWPAYPPMAIMPLGTGNDLARCMGWGGVFSDEPISQLMQAILHETIVTHLDRWRIDVEPNTSCNLEEEDDGMQSALPLTVMTNYFSIGADAHVALQFHHSRSANPQMLNSRLKNRIAYGGLGTIDLFKRSWKDLCEYITLECDGVDVTPRIKELKLHCILFHNITYYAGGTIPWGESSDNKPSCCDGKVEVLGFTTATLAALQMGGKGERIAQCSRVRVITNKAIPMQVDGEPCLLAPSIITLGFHSKVPMLKREKKTPCTPNLMRRGTRYGQKDSQVQSTSLIIQLPVIVVGRADYDNYKDCFERLKDTAYEIGIVNVESEAELDSARVLIQRLLVEHNSLPYEPDKNWRFLDYVSNAEEGTFRVSRQQEHVQSVSDVCNTDECLLILDHAFPSITDREAVELFQPQQPIPSTSTSAAPRYHNSRRISETLRIVLSSDAQETHL</sequence>
<evidence type="ECO:0000255" key="1">
    <source>
        <dbReference type="PROSITE-ProRule" id="PRU00783"/>
    </source>
</evidence>
<evidence type="ECO:0000256" key="2">
    <source>
        <dbReference type="SAM" id="MobiDB-lite"/>
    </source>
</evidence>
<evidence type="ECO:0000305" key="3"/>
<keyword id="KW-0067">ATP-binding</keyword>
<keyword id="KW-0418">Kinase</keyword>
<keyword id="KW-0547">Nucleotide-binding</keyword>
<keyword id="KW-1185">Reference proteome</keyword>
<keyword id="KW-0808">Transferase</keyword>
<proteinExistence type="inferred from homology"/>